<name>YHBP_SHISS</name>
<evidence type="ECO:0000255" key="1">
    <source>
        <dbReference type="HAMAP-Rule" id="MF_00764"/>
    </source>
</evidence>
<organism>
    <name type="scientific">Shigella sonnei (strain Ss046)</name>
    <dbReference type="NCBI Taxonomy" id="300269"/>
    <lineage>
        <taxon>Bacteria</taxon>
        <taxon>Pseudomonadati</taxon>
        <taxon>Pseudomonadota</taxon>
        <taxon>Gammaproteobacteria</taxon>
        <taxon>Enterobacterales</taxon>
        <taxon>Enterobacteriaceae</taxon>
        <taxon>Shigella</taxon>
    </lineage>
</organism>
<feature type="chain" id="PRO_1000046785" description="UPF0306 protein YhbP">
    <location>
        <begin position="1"/>
        <end position="147"/>
    </location>
</feature>
<gene>
    <name evidence="1" type="primary">yhbP</name>
    <name type="ordered locus">SSON_3300</name>
</gene>
<sequence>METLITISRWLAKQHVVTWCVQQEGELWCANAFYLFDAQKVAFYILTEEKTRHAQMSGPQAAVAGTVNGQPKTVALIRGVQFKGEIRRLEGEESDLARQAYNRRFPVARMLSAPVWEIRLDEIKFTDNTLGFGKKMIWLRDSGTEQA</sequence>
<keyword id="KW-1185">Reference proteome</keyword>
<dbReference type="EMBL" id="CP000038">
    <property type="protein sequence ID" value="AAZ89875.1"/>
    <property type="molecule type" value="Genomic_DNA"/>
</dbReference>
<dbReference type="RefSeq" id="WP_000449043.1">
    <property type="nucleotide sequence ID" value="NC_007384.1"/>
</dbReference>
<dbReference type="SMR" id="Q3YX87"/>
<dbReference type="KEGG" id="ssn:SSON_3300"/>
<dbReference type="HOGENOM" id="CLU_105087_3_0_6"/>
<dbReference type="Proteomes" id="UP000002529">
    <property type="component" value="Chromosome"/>
</dbReference>
<dbReference type="FunFam" id="2.30.110.10:FF:000003">
    <property type="entry name" value="UPF0306 protein YhbP"/>
    <property type="match status" value="1"/>
</dbReference>
<dbReference type="Gene3D" id="2.30.110.10">
    <property type="entry name" value="Electron Transport, Fmn-binding Protein, Chain A"/>
    <property type="match status" value="1"/>
</dbReference>
<dbReference type="HAMAP" id="MF_00764">
    <property type="entry name" value="UPF0306"/>
    <property type="match status" value="1"/>
</dbReference>
<dbReference type="InterPro" id="IPR012349">
    <property type="entry name" value="Split_barrel_FMN-bd"/>
</dbReference>
<dbReference type="InterPro" id="IPR011194">
    <property type="entry name" value="UPF0306"/>
</dbReference>
<dbReference type="NCBIfam" id="NF002900">
    <property type="entry name" value="PRK03467.1"/>
    <property type="match status" value="1"/>
</dbReference>
<dbReference type="PIRSF" id="PIRSF009554">
    <property type="entry name" value="UCP009554"/>
    <property type="match status" value="1"/>
</dbReference>
<dbReference type="SUPFAM" id="SSF50475">
    <property type="entry name" value="FMN-binding split barrel"/>
    <property type="match status" value="1"/>
</dbReference>
<accession>Q3YX87</accession>
<protein>
    <recommendedName>
        <fullName evidence="1">UPF0306 protein YhbP</fullName>
    </recommendedName>
</protein>
<comment type="similarity">
    <text evidence="1">Belongs to the UPF0306 family.</text>
</comment>
<proteinExistence type="inferred from homology"/>
<reference key="1">
    <citation type="journal article" date="2005" name="Nucleic Acids Res.">
        <title>Genome dynamics and diversity of Shigella species, the etiologic agents of bacillary dysentery.</title>
        <authorList>
            <person name="Yang F."/>
            <person name="Yang J."/>
            <person name="Zhang X."/>
            <person name="Chen L."/>
            <person name="Jiang Y."/>
            <person name="Yan Y."/>
            <person name="Tang X."/>
            <person name="Wang J."/>
            <person name="Xiong Z."/>
            <person name="Dong J."/>
            <person name="Xue Y."/>
            <person name="Zhu Y."/>
            <person name="Xu X."/>
            <person name="Sun L."/>
            <person name="Chen S."/>
            <person name="Nie H."/>
            <person name="Peng J."/>
            <person name="Xu J."/>
            <person name="Wang Y."/>
            <person name="Yuan Z."/>
            <person name="Wen Y."/>
            <person name="Yao Z."/>
            <person name="Shen Y."/>
            <person name="Qiang B."/>
            <person name="Hou Y."/>
            <person name="Yu J."/>
            <person name="Jin Q."/>
        </authorList>
    </citation>
    <scope>NUCLEOTIDE SEQUENCE [LARGE SCALE GENOMIC DNA]</scope>
    <source>
        <strain>Ss046</strain>
    </source>
</reference>